<comment type="function">
    <text evidence="1">Catalyzes the hydrolysis of glutamine to glutamate and ammonia as part of the biosynthesis of pyridoxal 5'-phosphate. The resulting ammonia molecule is channeled to the active site of PdxS.</text>
</comment>
<comment type="catalytic activity">
    <reaction evidence="1">
        <text>aldehydo-D-ribose 5-phosphate + D-glyceraldehyde 3-phosphate + L-glutamine = pyridoxal 5'-phosphate + L-glutamate + phosphate + 3 H2O + H(+)</text>
        <dbReference type="Rhea" id="RHEA:31507"/>
        <dbReference type="ChEBI" id="CHEBI:15377"/>
        <dbReference type="ChEBI" id="CHEBI:15378"/>
        <dbReference type="ChEBI" id="CHEBI:29985"/>
        <dbReference type="ChEBI" id="CHEBI:43474"/>
        <dbReference type="ChEBI" id="CHEBI:58273"/>
        <dbReference type="ChEBI" id="CHEBI:58359"/>
        <dbReference type="ChEBI" id="CHEBI:59776"/>
        <dbReference type="ChEBI" id="CHEBI:597326"/>
        <dbReference type="EC" id="4.3.3.6"/>
    </reaction>
</comment>
<comment type="catalytic activity">
    <reaction evidence="1">
        <text>L-glutamine + H2O = L-glutamate + NH4(+)</text>
        <dbReference type="Rhea" id="RHEA:15889"/>
        <dbReference type="ChEBI" id="CHEBI:15377"/>
        <dbReference type="ChEBI" id="CHEBI:28938"/>
        <dbReference type="ChEBI" id="CHEBI:29985"/>
        <dbReference type="ChEBI" id="CHEBI:58359"/>
        <dbReference type="EC" id="3.5.1.2"/>
    </reaction>
</comment>
<comment type="pathway">
    <text evidence="1">Cofactor biosynthesis; pyridoxal 5'-phosphate biosynthesis.</text>
</comment>
<comment type="subunit">
    <text evidence="1">In the presence of PdxS, forms a dodecamer of heterodimers. Only shows activity in the heterodimer.</text>
</comment>
<comment type="similarity">
    <text evidence="1">Belongs to the glutaminase PdxT/SNO family.</text>
</comment>
<proteinExistence type="inferred from homology"/>
<organism>
    <name type="scientific">Methanococcus maripaludis (strain C5 / ATCC BAA-1333)</name>
    <dbReference type="NCBI Taxonomy" id="402880"/>
    <lineage>
        <taxon>Archaea</taxon>
        <taxon>Methanobacteriati</taxon>
        <taxon>Methanobacteriota</taxon>
        <taxon>Methanomada group</taxon>
        <taxon>Methanococci</taxon>
        <taxon>Methanococcales</taxon>
        <taxon>Methanococcaceae</taxon>
        <taxon>Methanococcus</taxon>
    </lineage>
</organism>
<protein>
    <recommendedName>
        <fullName evidence="1">Pyridoxal 5'-phosphate synthase subunit PdxT</fullName>
        <ecNumber evidence="1">4.3.3.6</ecNumber>
    </recommendedName>
    <alternativeName>
        <fullName evidence="1">Pdx2</fullName>
    </alternativeName>
    <alternativeName>
        <fullName evidence="1">Pyridoxal 5'-phosphate synthase glutaminase subunit</fullName>
        <ecNumber evidence="1">3.5.1.2</ecNumber>
    </alternativeName>
</protein>
<feature type="chain" id="PRO_1000069463" description="Pyridoxal 5'-phosphate synthase subunit PdxT">
    <location>
        <begin position="1"/>
        <end position="187"/>
    </location>
</feature>
<feature type="active site" description="Nucleophile" evidence="1">
    <location>
        <position position="76"/>
    </location>
</feature>
<feature type="active site" description="Charge relay system" evidence="1">
    <location>
        <position position="165"/>
    </location>
</feature>
<feature type="active site" description="Charge relay system" evidence="1">
    <location>
        <position position="167"/>
    </location>
</feature>
<feature type="binding site" evidence="1">
    <location>
        <begin position="47"/>
        <end position="49"/>
    </location>
    <ligand>
        <name>L-glutamine</name>
        <dbReference type="ChEBI" id="CHEBI:58359"/>
    </ligand>
</feature>
<feature type="binding site" evidence="1">
    <location>
        <position position="102"/>
    </location>
    <ligand>
        <name>L-glutamine</name>
        <dbReference type="ChEBI" id="CHEBI:58359"/>
    </ligand>
</feature>
<feature type="binding site" evidence="1">
    <location>
        <begin position="128"/>
        <end position="129"/>
    </location>
    <ligand>
        <name>L-glutamine</name>
        <dbReference type="ChEBI" id="CHEBI:58359"/>
    </ligand>
</feature>
<name>PDXT_METM5</name>
<sequence length="187" mass="20583">MKIMGILGIQGDIEEHEDAVRKINCIPKRIRTVDDLEGIDALIIPGGESTTIGKLMVSYGFIDKIRNLKIPILGTCAGMVLLSKGTGKEQPLLDILNVTIKRNAYGSQKDSFEKEIVLGGKEIHAVFIRAPQVGDILSKDVEIISKDDENIVGVKQGNIMAISFHPELSDDGVIAYEYFLKNFVEKN</sequence>
<dbReference type="EC" id="4.3.3.6" evidence="1"/>
<dbReference type="EC" id="3.5.1.2" evidence="1"/>
<dbReference type="EMBL" id="CP000609">
    <property type="protein sequence ID" value="ABO36050.1"/>
    <property type="molecule type" value="Genomic_DNA"/>
</dbReference>
<dbReference type="RefSeq" id="WP_011869496.1">
    <property type="nucleotide sequence ID" value="NC_009135.1"/>
</dbReference>
<dbReference type="SMR" id="A4G0R6"/>
<dbReference type="STRING" id="402880.MmarC5_1753"/>
<dbReference type="GeneID" id="4927959"/>
<dbReference type="KEGG" id="mmq:MmarC5_1753"/>
<dbReference type="eggNOG" id="arCOG00034">
    <property type="taxonomic scope" value="Archaea"/>
</dbReference>
<dbReference type="HOGENOM" id="CLU_069674_2_0_2"/>
<dbReference type="OrthoDB" id="26717at2157"/>
<dbReference type="UniPathway" id="UPA00245"/>
<dbReference type="Proteomes" id="UP000000253">
    <property type="component" value="Chromosome"/>
</dbReference>
<dbReference type="GO" id="GO:0005829">
    <property type="term" value="C:cytosol"/>
    <property type="evidence" value="ECO:0007669"/>
    <property type="project" value="TreeGrafter"/>
</dbReference>
<dbReference type="GO" id="GO:1903600">
    <property type="term" value="C:glutaminase complex"/>
    <property type="evidence" value="ECO:0007669"/>
    <property type="project" value="TreeGrafter"/>
</dbReference>
<dbReference type="GO" id="GO:0004359">
    <property type="term" value="F:glutaminase activity"/>
    <property type="evidence" value="ECO:0007669"/>
    <property type="project" value="UniProtKB-UniRule"/>
</dbReference>
<dbReference type="GO" id="GO:0036381">
    <property type="term" value="F:pyridoxal 5'-phosphate synthase (glutamine hydrolysing) activity"/>
    <property type="evidence" value="ECO:0007669"/>
    <property type="project" value="UniProtKB-UniRule"/>
</dbReference>
<dbReference type="GO" id="GO:0006543">
    <property type="term" value="P:glutamine catabolic process"/>
    <property type="evidence" value="ECO:0007669"/>
    <property type="project" value="UniProtKB-UniRule"/>
</dbReference>
<dbReference type="GO" id="GO:0042823">
    <property type="term" value="P:pyridoxal phosphate biosynthetic process"/>
    <property type="evidence" value="ECO:0007669"/>
    <property type="project" value="UniProtKB-UniRule"/>
</dbReference>
<dbReference type="GO" id="GO:0008614">
    <property type="term" value="P:pyridoxine metabolic process"/>
    <property type="evidence" value="ECO:0007669"/>
    <property type="project" value="TreeGrafter"/>
</dbReference>
<dbReference type="CDD" id="cd01749">
    <property type="entry name" value="GATase1_PB"/>
    <property type="match status" value="1"/>
</dbReference>
<dbReference type="FunFam" id="3.40.50.880:FF:000010">
    <property type="entry name" value="uncharacterized protein LOC100176842 isoform X2"/>
    <property type="match status" value="1"/>
</dbReference>
<dbReference type="Gene3D" id="3.40.50.880">
    <property type="match status" value="1"/>
</dbReference>
<dbReference type="HAMAP" id="MF_01615">
    <property type="entry name" value="PdxT"/>
    <property type="match status" value="1"/>
</dbReference>
<dbReference type="InterPro" id="IPR029062">
    <property type="entry name" value="Class_I_gatase-like"/>
</dbReference>
<dbReference type="InterPro" id="IPR002161">
    <property type="entry name" value="PdxT/SNO"/>
</dbReference>
<dbReference type="InterPro" id="IPR021196">
    <property type="entry name" value="PdxT/SNO_CS"/>
</dbReference>
<dbReference type="NCBIfam" id="TIGR03800">
    <property type="entry name" value="PLP_synth_Pdx2"/>
    <property type="match status" value="1"/>
</dbReference>
<dbReference type="PANTHER" id="PTHR31559">
    <property type="entry name" value="PYRIDOXAL 5'-PHOSPHATE SYNTHASE SUBUNIT SNO"/>
    <property type="match status" value="1"/>
</dbReference>
<dbReference type="PANTHER" id="PTHR31559:SF0">
    <property type="entry name" value="PYRIDOXAL 5'-PHOSPHATE SYNTHASE SUBUNIT SNO1-RELATED"/>
    <property type="match status" value="1"/>
</dbReference>
<dbReference type="Pfam" id="PF01174">
    <property type="entry name" value="SNO"/>
    <property type="match status" value="1"/>
</dbReference>
<dbReference type="PIRSF" id="PIRSF005639">
    <property type="entry name" value="Glut_amidoT_SNO"/>
    <property type="match status" value="1"/>
</dbReference>
<dbReference type="SUPFAM" id="SSF52317">
    <property type="entry name" value="Class I glutamine amidotransferase-like"/>
    <property type="match status" value="1"/>
</dbReference>
<dbReference type="PROSITE" id="PS01236">
    <property type="entry name" value="PDXT_SNO_1"/>
    <property type="match status" value="1"/>
</dbReference>
<dbReference type="PROSITE" id="PS51130">
    <property type="entry name" value="PDXT_SNO_2"/>
    <property type="match status" value="1"/>
</dbReference>
<keyword id="KW-0315">Glutamine amidotransferase</keyword>
<keyword id="KW-0378">Hydrolase</keyword>
<keyword id="KW-0456">Lyase</keyword>
<keyword id="KW-0663">Pyridoxal phosphate</keyword>
<evidence type="ECO:0000255" key="1">
    <source>
        <dbReference type="HAMAP-Rule" id="MF_01615"/>
    </source>
</evidence>
<gene>
    <name evidence="1" type="primary">pdxT</name>
    <name type="ordered locus">MmarC5_1753</name>
</gene>
<accession>A4G0R6</accession>
<reference key="1">
    <citation type="submission" date="2007-03" db="EMBL/GenBank/DDBJ databases">
        <title>Complete sequence of chromosome of Methanococcus maripaludis C5.</title>
        <authorList>
            <consortium name="US DOE Joint Genome Institute"/>
            <person name="Copeland A."/>
            <person name="Lucas S."/>
            <person name="Lapidus A."/>
            <person name="Barry K."/>
            <person name="Glavina del Rio T."/>
            <person name="Dalin E."/>
            <person name="Tice H."/>
            <person name="Pitluck S."/>
            <person name="Chertkov O."/>
            <person name="Brettin T."/>
            <person name="Bruce D."/>
            <person name="Han C."/>
            <person name="Detter J.C."/>
            <person name="Schmutz J."/>
            <person name="Larimer F."/>
            <person name="Land M."/>
            <person name="Hauser L."/>
            <person name="Kyrpides N."/>
            <person name="Mikhailova N."/>
            <person name="Sieprawska-Lupa M."/>
            <person name="Whitman W.B."/>
            <person name="Richardson P."/>
        </authorList>
    </citation>
    <scope>NUCLEOTIDE SEQUENCE [LARGE SCALE GENOMIC DNA]</scope>
    <source>
        <strain>C5 / ATCC BAA-1333</strain>
    </source>
</reference>